<dbReference type="EC" id="4.2.3.5" evidence="1"/>
<dbReference type="EMBL" id="CP000026">
    <property type="protein sequence ID" value="AAV76482.1"/>
    <property type="molecule type" value="Genomic_DNA"/>
</dbReference>
<dbReference type="RefSeq" id="WP_000918458.1">
    <property type="nucleotide sequence ID" value="NC_006511.1"/>
</dbReference>
<dbReference type="SMR" id="Q5PCX2"/>
<dbReference type="KEGG" id="spt:SPA0480"/>
<dbReference type="HOGENOM" id="CLU_034547_0_2_6"/>
<dbReference type="UniPathway" id="UPA00053">
    <property type="reaction ID" value="UER00090"/>
</dbReference>
<dbReference type="Proteomes" id="UP000008185">
    <property type="component" value="Chromosome"/>
</dbReference>
<dbReference type="GO" id="GO:0005829">
    <property type="term" value="C:cytosol"/>
    <property type="evidence" value="ECO:0007669"/>
    <property type="project" value="TreeGrafter"/>
</dbReference>
<dbReference type="GO" id="GO:0004107">
    <property type="term" value="F:chorismate synthase activity"/>
    <property type="evidence" value="ECO:0007669"/>
    <property type="project" value="UniProtKB-UniRule"/>
</dbReference>
<dbReference type="GO" id="GO:0010181">
    <property type="term" value="F:FMN binding"/>
    <property type="evidence" value="ECO:0007669"/>
    <property type="project" value="TreeGrafter"/>
</dbReference>
<dbReference type="GO" id="GO:0008652">
    <property type="term" value="P:amino acid biosynthetic process"/>
    <property type="evidence" value="ECO:0007669"/>
    <property type="project" value="UniProtKB-KW"/>
</dbReference>
<dbReference type="GO" id="GO:0009073">
    <property type="term" value="P:aromatic amino acid family biosynthetic process"/>
    <property type="evidence" value="ECO:0007669"/>
    <property type="project" value="UniProtKB-KW"/>
</dbReference>
<dbReference type="GO" id="GO:0009423">
    <property type="term" value="P:chorismate biosynthetic process"/>
    <property type="evidence" value="ECO:0007669"/>
    <property type="project" value="UniProtKB-UniRule"/>
</dbReference>
<dbReference type="CDD" id="cd07304">
    <property type="entry name" value="Chorismate_synthase"/>
    <property type="match status" value="1"/>
</dbReference>
<dbReference type="FunFam" id="3.60.150.10:FF:000001">
    <property type="entry name" value="Chorismate synthase"/>
    <property type="match status" value="1"/>
</dbReference>
<dbReference type="Gene3D" id="3.60.150.10">
    <property type="entry name" value="Chorismate synthase AroC"/>
    <property type="match status" value="1"/>
</dbReference>
<dbReference type="HAMAP" id="MF_00300">
    <property type="entry name" value="Chorismate_synth"/>
    <property type="match status" value="1"/>
</dbReference>
<dbReference type="InterPro" id="IPR000453">
    <property type="entry name" value="Chorismate_synth"/>
</dbReference>
<dbReference type="InterPro" id="IPR035904">
    <property type="entry name" value="Chorismate_synth_AroC_sf"/>
</dbReference>
<dbReference type="InterPro" id="IPR020541">
    <property type="entry name" value="Chorismate_synthase_CS"/>
</dbReference>
<dbReference type="NCBIfam" id="TIGR00033">
    <property type="entry name" value="aroC"/>
    <property type="match status" value="1"/>
</dbReference>
<dbReference type="NCBIfam" id="NF003793">
    <property type="entry name" value="PRK05382.1"/>
    <property type="match status" value="1"/>
</dbReference>
<dbReference type="PANTHER" id="PTHR21085">
    <property type="entry name" value="CHORISMATE SYNTHASE"/>
    <property type="match status" value="1"/>
</dbReference>
<dbReference type="PANTHER" id="PTHR21085:SF0">
    <property type="entry name" value="CHORISMATE SYNTHASE"/>
    <property type="match status" value="1"/>
</dbReference>
<dbReference type="Pfam" id="PF01264">
    <property type="entry name" value="Chorismate_synt"/>
    <property type="match status" value="1"/>
</dbReference>
<dbReference type="PIRSF" id="PIRSF001456">
    <property type="entry name" value="Chorismate_synth"/>
    <property type="match status" value="1"/>
</dbReference>
<dbReference type="SUPFAM" id="SSF103263">
    <property type="entry name" value="Chorismate synthase, AroC"/>
    <property type="match status" value="1"/>
</dbReference>
<dbReference type="PROSITE" id="PS00787">
    <property type="entry name" value="CHORISMATE_SYNTHASE_1"/>
    <property type="match status" value="1"/>
</dbReference>
<dbReference type="PROSITE" id="PS00788">
    <property type="entry name" value="CHORISMATE_SYNTHASE_2"/>
    <property type="match status" value="1"/>
</dbReference>
<dbReference type="PROSITE" id="PS00789">
    <property type="entry name" value="CHORISMATE_SYNTHASE_3"/>
    <property type="match status" value="1"/>
</dbReference>
<keyword id="KW-0028">Amino-acid biosynthesis</keyword>
<keyword id="KW-0057">Aromatic amino acid biosynthesis</keyword>
<keyword id="KW-0274">FAD</keyword>
<keyword id="KW-0285">Flavoprotein</keyword>
<keyword id="KW-0288">FMN</keyword>
<keyword id="KW-0456">Lyase</keyword>
<keyword id="KW-0521">NADP</keyword>
<comment type="function">
    <text evidence="1">Catalyzes the anti-1,4-elimination of the C-3 phosphate and the C-6 proR hydrogen from 5-enolpyruvylshikimate-3-phosphate (EPSP) to yield chorismate, which is the branch point compound that serves as the starting substrate for the three terminal pathways of aromatic amino acid biosynthesis. This reaction introduces a second double bond into the aromatic ring system.</text>
</comment>
<comment type="catalytic activity">
    <reaction evidence="1">
        <text>5-O-(1-carboxyvinyl)-3-phosphoshikimate = chorismate + phosphate</text>
        <dbReference type="Rhea" id="RHEA:21020"/>
        <dbReference type="ChEBI" id="CHEBI:29748"/>
        <dbReference type="ChEBI" id="CHEBI:43474"/>
        <dbReference type="ChEBI" id="CHEBI:57701"/>
        <dbReference type="EC" id="4.2.3.5"/>
    </reaction>
</comment>
<comment type="cofactor">
    <cofactor evidence="1">
        <name>FMNH2</name>
        <dbReference type="ChEBI" id="CHEBI:57618"/>
    </cofactor>
    <text evidence="1">Reduced FMN (FMNH(2)).</text>
</comment>
<comment type="pathway">
    <text evidence="1">Metabolic intermediate biosynthesis; chorismate biosynthesis; chorismate from D-erythrose 4-phosphate and phosphoenolpyruvate: step 7/7.</text>
</comment>
<comment type="subunit">
    <text evidence="1">Homotetramer.</text>
</comment>
<comment type="similarity">
    <text evidence="1">Belongs to the chorismate synthase family.</text>
</comment>
<proteinExistence type="inferred from homology"/>
<protein>
    <recommendedName>
        <fullName evidence="1">Chorismate synthase</fullName>
        <shortName evidence="1">CS</shortName>
        <ecNumber evidence="1">4.2.3.5</ecNumber>
    </recommendedName>
    <alternativeName>
        <fullName evidence="1">5-enolpyruvylshikimate-3-phosphate phospholyase</fullName>
    </alternativeName>
</protein>
<reference key="1">
    <citation type="journal article" date="2004" name="Nat. Genet.">
        <title>Comparison of genome degradation in Paratyphi A and Typhi, human-restricted serovars of Salmonella enterica that cause typhoid.</title>
        <authorList>
            <person name="McClelland M."/>
            <person name="Sanderson K.E."/>
            <person name="Clifton S.W."/>
            <person name="Latreille P."/>
            <person name="Porwollik S."/>
            <person name="Sabo A."/>
            <person name="Meyer R."/>
            <person name="Bieri T."/>
            <person name="Ozersky P."/>
            <person name="McLellan M."/>
            <person name="Harkins C.R."/>
            <person name="Wang C."/>
            <person name="Nguyen C."/>
            <person name="Berghoff A."/>
            <person name="Elliott G."/>
            <person name="Kohlberg S."/>
            <person name="Strong C."/>
            <person name="Du F."/>
            <person name="Carter J."/>
            <person name="Kremizki C."/>
            <person name="Layman D."/>
            <person name="Leonard S."/>
            <person name="Sun H."/>
            <person name="Fulton L."/>
            <person name="Nash W."/>
            <person name="Miner T."/>
            <person name="Minx P."/>
            <person name="Delehaunty K."/>
            <person name="Fronick C."/>
            <person name="Magrini V."/>
            <person name="Nhan M."/>
            <person name="Warren W."/>
            <person name="Florea L."/>
            <person name="Spieth J."/>
            <person name="Wilson R.K."/>
        </authorList>
    </citation>
    <scope>NUCLEOTIDE SEQUENCE [LARGE SCALE GENOMIC DNA]</scope>
    <source>
        <strain>ATCC 9150 / SARB42</strain>
    </source>
</reference>
<organism>
    <name type="scientific">Salmonella paratyphi A (strain ATCC 9150 / SARB42)</name>
    <dbReference type="NCBI Taxonomy" id="295319"/>
    <lineage>
        <taxon>Bacteria</taxon>
        <taxon>Pseudomonadati</taxon>
        <taxon>Pseudomonadota</taxon>
        <taxon>Gammaproteobacteria</taxon>
        <taxon>Enterobacterales</taxon>
        <taxon>Enterobacteriaceae</taxon>
        <taxon>Salmonella</taxon>
    </lineage>
</organism>
<evidence type="ECO:0000255" key="1">
    <source>
        <dbReference type="HAMAP-Rule" id="MF_00300"/>
    </source>
</evidence>
<name>AROC_SALPA</name>
<sequence>MAGNTIGQLFRVTTFGESHGLALGCIVDGVPPGIPLTEADLQHDLDRRRPGTSRYTTQRREPDQVKILSGVFDGVTTGTSIGLLIENTDQRSQDYSAIKDVFRPGHADYTYEQKYGLRDYRGGGRSSARETAMRVAAGAIAKKYLAEKFGIEIRGCLTQMGDIPLEIKDWRQVELNPFFCPDADKLDALDELMRALKKEGDSIGAKVTVVASGVPAGLGEPVFDRLDADIAHALMSINAVKGVEIGEGFNVVALRGSQNRDEITAQGFQSNHAGGILGGISSGQHIVAHMALKPTSSITVPGRTINRMGEEVEMITKGRHDPCVGIRAVPIAEAMLAIVLMDHLLRHRAQNADVKTEIPRW</sequence>
<accession>Q5PCX2</accession>
<feature type="chain" id="PRO_0000140637" description="Chorismate synthase">
    <location>
        <begin position="1"/>
        <end position="361"/>
    </location>
</feature>
<feature type="binding site" evidence="1">
    <location>
        <position position="48"/>
    </location>
    <ligand>
        <name>NADP(+)</name>
        <dbReference type="ChEBI" id="CHEBI:58349"/>
    </ligand>
</feature>
<feature type="binding site" evidence="1">
    <location>
        <position position="54"/>
    </location>
    <ligand>
        <name>NADP(+)</name>
        <dbReference type="ChEBI" id="CHEBI:58349"/>
    </ligand>
</feature>
<feature type="binding site" evidence="1">
    <location>
        <begin position="125"/>
        <end position="127"/>
    </location>
    <ligand>
        <name>FMN</name>
        <dbReference type="ChEBI" id="CHEBI:58210"/>
    </ligand>
</feature>
<feature type="binding site" evidence="1">
    <location>
        <begin position="238"/>
        <end position="239"/>
    </location>
    <ligand>
        <name>FMN</name>
        <dbReference type="ChEBI" id="CHEBI:58210"/>
    </ligand>
</feature>
<feature type="binding site" evidence="1">
    <location>
        <position position="278"/>
    </location>
    <ligand>
        <name>FMN</name>
        <dbReference type="ChEBI" id="CHEBI:58210"/>
    </ligand>
</feature>
<feature type="binding site" evidence="1">
    <location>
        <begin position="293"/>
        <end position="297"/>
    </location>
    <ligand>
        <name>FMN</name>
        <dbReference type="ChEBI" id="CHEBI:58210"/>
    </ligand>
</feature>
<feature type="binding site" evidence="1">
    <location>
        <position position="319"/>
    </location>
    <ligand>
        <name>FMN</name>
        <dbReference type="ChEBI" id="CHEBI:58210"/>
    </ligand>
</feature>
<gene>
    <name evidence="1" type="primary">aroC</name>
    <name type="ordered locus">SPA0480</name>
</gene>